<protein>
    <recommendedName>
        <fullName>CDP-diacylglycerol--serine O-phosphatidyltransferase</fullName>
        <ecNumber>2.7.8.8</ecNumber>
    </recommendedName>
    <alternativeName>
        <fullName>Phosphatidylserine synthase</fullName>
    </alternativeName>
</protein>
<accession>Q9ZBM2</accession>
<gene>
    <name type="primary">pssA</name>
    <name type="ordered locus">ML0310</name>
    <name type="ORF">MLCB1450.12</name>
</gene>
<evidence type="ECO:0000255" key="1"/>
<evidence type="ECO:0000305" key="2"/>
<proteinExistence type="inferred from homology"/>
<sequence>MTSRPRSRRAVNLQILPSSMTVLSICAGLTSIRFALEHQPKAAIALIAAAAILDGLDGRVARILGAESRMGEEIDSLADAVNFGVAPAVVLYATMLSTTPVGWVAVLLYPVCVVLRLARFNALLDDGTQPAYTREFFVGMPAPAGAVSVIGLLALKLQFGAGWWTSTWFLCIWVTGTSMLLISRIPMKKMHTVSVPPHYAAVFVAMLAIFAAAVVLAPYLLIWVIILTYLCHIPFAIHNQRWLAAHPEAWDDKFKQQHDARRAARRACPNRHAVPRLGLLKPGSRSMVRSGLRKPGRRFI</sequence>
<keyword id="KW-1003">Cell membrane</keyword>
<keyword id="KW-0444">Lipid biosynthesis</keyword>
<keyword id="KW-0443">Lipid metabolism</keyword>
<keyword id="KW-0472">Membrane</keyword>
<keyword id="KW-0594">Phospholipid biosynthesis</keyword>
<keyword id="KW-1208">Phospholipid metabolism</keyword>
<keyword id="KW-1185">Reference proteome</keyword>
<keyword id="KW-0808">Transferase</keyword>
<keyword id="KW-0812">Transmembrane</keyword>
<keyword id="KW-1133">Transmembrane helix</keyword>
<name>PSS_MYCLE</name>
<comment type="catalytic activity">
    <reaction>
        <text>a CDP-1,2-diacyl-sn-glycerol + L-serine = a 1,2-diacyl-sn-glycero-3-phospho-L-serine + CMP + H(+)</text>
        <dbReference type="Rhea" id="RHEA:16913"/>
        <dbReference type="ChEBI" id="CHEBI:15378"/>
        <dbReference type="ChEBI" id="CHEBI:33384"/>
        <dbReference type="ChEBI" id="CHEBI:57262"/>
        <dbReference type="ChEBI" id="CHEBI:58332"/>
        <dbReference type="ChEBI" id="CHEBI:60377"/>
        <dbReference type="EC" id="2.7.8.8"/>
    </reaction>
</comment>
<comment type="subcellular location">
    <subcellularLocation>
        <location>Cell membrane</location>
        <topology>Multi-pass membrane protein</topology>
    </subcellularLocation>
</comment>
<comment type="similarity">
    <text evidence="2">Belongs to the CDP-alcohol phosphatidyltransferase class-I family.</text>
</comment>
<feature type="chain" id="PRO_0000056797" description="CDP-diacylglycerol--serine O-phosphatidyltransferase">
    <location>
        <begin position="1"/>
        <end position="300"/>
    </location>
</feature>
<feature type="transmembrane region" description="Helical" evidence="1">
    <location>
        <begin position="10"/>
        <end position="30"/>
    </location>
</feature>
<feature type="transmembrane region" description="Helical" evidence="1">
    <location>
        <begin position="74"/>
        <end position="94"/>
    </location>
</feature>
<feature type="transmembrane region" description="Helical" evidence="1">
    <location>
        <begin position="95"/>
        <end position="115"/>
    </location>
</feature>
<feature type="transmembrane region" description="Helical" evidence="1">
    <location>
        <begin position="135"/>
        <end position="155"/>
    </location>
</feature>
<feature type="transmembrane region" description="Helical" evidence="1">
    <location>
        <begin position="162"/>
        <end position="182"/>
    </location>
</feature>
<feature type="transmembrane region" description="Helical" evidence="1">
    <location>
        <begin position="207"/>
        <end position="227"/>
    </location>
</feature>
<reference key="1">
    <citation type="journal article" date="2001" name="Nature">
        <title>Massive gene decay in the leprosy bacillus.</title>
        <authorList>
            <person name="Cole S.T."/>
            <person name="Eiglmeier K."/>
            <person name="Parkhill J."/>
            <person name="James K.D."/>
            <person name="Thomson N.R."/>
            <person name="Wheeler P.R."/>
            <person name="Honore N."/>
            <person name="Garnier T."/>
            <person name="Churcher C.M."/>
            <person name="Harris D.E."/>
            <person name="Mungall K.L."/>
            <person name="Basham D."/>
            <person name="Brown D."/>
            <person name="Chillingworth T."/>
            <person name="Connor R."/>
            <person name="Davies R.M."/>
            <person name="Devlin K."/>
            <person name="Duthoy S."/>
            <person name="Feltwell T."/>
            <person name="Fraser A."/>
            <person name="Hamlin N."/>
            <person name="Holroyd S."/>
            <person name="Hornsby T."/>
            <person name="Jagels K."/>
            <person name="Lacroix C."/>
            <person name="Maclean J."/>
            <person name="Moule S."/>
            <person name="Murphy L.D."/>
            <person name="Oliver K."/>
            <person name="Quail M.A."/>
            <person name="Rajandream M.A."/>
            <person name="Rutherford K.M."/>
            <person name="Rutter S."/>
            <person name="Seeger K."/>
            <person name="Simon S."/>
            <person name="Simmonds M."/>
            <person name="Skelton J."/>
            <person name="Squares R."/>
            <person name="Squares S."/>
            <person name="Stevens K."/>
            <person name="Taylor K."/>
            <person name="Whitehead S."/>
            <person name="Woodward J.R."/>
            <person name="Barrell B.G."/>
        </authorList>
    </citation>
    <scope>NUCLEOTIDE SEQUENCE [LARGE SCALE GENOMIC DNA]</scope>
    <source>
        <strain>TN</strain>
    </source>
</reference>
<organism>
    <name type="scientific">Mycobacterium leprae (strain TN)</name>
    <dbReference type="NCBI Taxonomy" id="272631"/>
    <lineage>
        <taxon>Bacteria</taxon>
        <taxon>Bacillati</taxon>
        <taxon>Actinomycetota</taxon>
        <taxon>Actinomycetes</taxon>
        <taxon>Mycobacteriales</taxon>
        <taxon>Mycobacteriaceae</taxon>
        <taxon>Mycobacterium</taxon>
    </lineage>
</organism>
<dbReference type="EC" id="2.7.8.8"/>
<dbReference type="EMBL" id="AL035159">
    <property type="protein sequence ID" value="CAA22696.1"/>
    <property type="molecule type" value="Genomic_DNA"/>
</dbReference>
<dbReference type="EMBL" id="AL583918">
    <property type="protein sequence ID" value="CAC29818.1"/>
    <property type="molecule type" value="Genomic_DNA"/>
</dbReference>
<dbReference type="PIR" id="T44730">
    <property type="entry name" value="T44730"/>
</dbReference>
<dbReference type="RefSeq" id="NP_301340.1">
    <property type="nucleotide sequence ID" value="NC_002677.1"/>
</dbReference>
<dbReference type="RefSeq" id="WP_010907664.1">
    <property type="nucleotide sequence ID" value="NC_002677.1"/>
</dbReference>
<dbReference type="SMR" id="Q9ZBM2"/>
<dbReference type="STRING" id="272631.gene:17574129"/>
<dbReference type="KEGG" id="mle:ML0310"/>
<dbReference type="PATRIC" id="fig|272631.5.peg.496"/>
<dbReference type="Leproma" id="ML0310"/>
<dbReference type="eggNOG" id="COG1183">
    <property type="taxonomic scope" value="Bacteria"/>
</dbReference>
<dbReference type="HOGENOM" id="CLU_049944_1_1_11"/>
<dbReference type="OrthoDB" id="9777147at2"/>
<dbReference type="Proteomes" id="UP000000806">
    <property type="component" value="Chromosome"/>
</dbReference>
<dbReference type="GO" id="GO:0005886">
    <property type="term" value="C:plasma membrane"/>
    <property type="evidence" value="ECO:0007669"/>
    <property type="project" value="UniProtKB-SubCell"/>
</dbReference>
<dbReference type="GO" id="GO:0003882">
    <property type="term" value="F:CDP-diacylglycerol-serine O-phosphatidyltransferase activity"/>
    <property type="evidence" value="ECO:0007669"/>
    <property type="project" value="UniProtKB-EC"/>
</dbReference>
<dbReference type="GO" id="GO:0008654">
    <property type="term" value="P:phospholipid biosynthetic process"/>
    <property type="evidence" value="ECO:0007669"/>
    <property type="project" value="UniProtKB-KW"/>
</dbReference>
<dbReference type="Gene3D" id="1.20.120.1760">
    <property type="match status" value="1"/>
</dbReference>
<dbReference type="InterPro" id="IPR050324">
    <property type="entry name" value="CDP-alcohol_PTase-I"/>
</dbReference>
<dbReference type="InterPro" id="IPR004533">
    <property type="entry name" value="CDP-diaglyc--ser_O-PTrfase"/>
</dbReference>
<dbReference type="InterPro" id="IPR000462">
    <property type="entry name" value="CDP-OH_P_trans"/>
</dbReference>
<dbReference type="InterPro" id="IPR043130">
    <property type="entry name" value="CDP-OH_PTrfase_TM_dom"/>
</dbReference>
<dbReference type="InterPro" id="IPR048254">
    <property type="entry name" value="CDP_ALCOHOL_P_TRANSF_CS"/>
</dbReference>
<dbReference type="NCBIfam" id="TIGR00473">
    <property type="entry name" value="pssA"/>
    <property type="match status" value="1"/>
</dbReference>
<dbReference type="PANTHER" id="PTHR14269">
    <property type="entry name" value="CDP-DIACYLGLYCEROL--GLYCEROL-3-PHOSPHATE 3-PHOSPHATIDYLTRANSFERASE-RELATED"/>
    <property type="match status" value="1"/>
</dbReference>
<dbReference type="PANTHER" id="PTHR14269:SF61">
    <property type="entry name" value="CDP-DIACYLGLYCEROL--SERINE O-PHOSPHATIDYLTRANSFERASE"/>
    <property type="match status" value="1"/>
</dbReference>
<dbReference type="Pfam" id="PF01066">
    <property type="entry name" value="CDP-OH_P_transf"/>
    <property type="match status" value="1"/>
</dbReference>
<dbReference type="PROSITE" id="PS00379">
    <property type="entry name" value="CDP_ALCOHOL_P_TRANSF"/>
    <property type="match status" value="1"/>
</dbReference>